<dbReference type="EC" id="2.1.1.192" evidence="1"/>
<dbReference type="EMBL" id="CP001001">
    <property type="protein sequence ID" value="ACB23131.1"/>
    <property type="status" value="ALT_INIT"/>
    <property type="molecule type" value="Genomic_DNA"/>
</dbReference>
<dbReference type="RefSeq" id="WP_041372269.1">
    <property type="nucleotide sequence ID" value="NC_010505.1"/>
</dbReference>
<dbReference type="SMR" id="B1M1U6"/>
<dbReference type="STRING" id="426355.Mrad2831_1122"/>
<dbReference type="GeneID" id="6137139"/>
<dbReference type="KEGG" id="mrd:Mrad2831_1122"/>
<dbReference type="PATRIC" id="fig|426355.14.peg.1166"/>
<dbReference type="eggNOG" id="COG0820">
    <property type="taxonomic scope" value="Bacteria"/>
</dbReference>
<dbReference type="HOGENOM" id="CLU_029101_0_0_5"/>
<dbReference type="OrthoDB" id="9793973at2"/>
<dbReference type="Proteomes" id="UP000006589">
    <property type="component" value="Chromosome"/>
</dbReference>
<dbReference type="GO" id="GO:0005737">
    <property type="term" value="C:cytoplasm"/>
    <property type="evidence" value="ECO:0007669"/>
    <property type="project" value="UniProtKB-SubCell"/>
</dbReference>
<dbReference type="GO" id="GO:0051539">
    <property type="term" value="F:4 iron, 4 sulfur cluster binding"/>
    <property type="evidence" value="ECO:0007669"/>
    <property type="project" value="UniProtKB-UniRule"/>
</dbReference>
<dbReference type="GO" id="GO:0046872">
    <property type="term" value="F:metal ion binding"/>
    <property type="evidence" value="ECO:0007669"/>
    <property type="project" value="UniProtKB-KW"/>
</dbReference>
<dbReference type="GO" id="GO:0070040">
    <property type="term" value="F:rRNA (adenine(2503)-C2-)-methyltransferase activity"/>
    <property type="evidence" value="ECO:0007669"/>
    <property type="project" value="UniProtKB-UniRule"/>
</dbReference>
<dbReference type="GO" id="GO:0019843">
    <property type="term" value="F:rRNA binding"/>
    <property type="evidence" value="ECO:0007669"/>
    <property type="project" value="UniProtKB-UniRule"/>
</dbReference>
<dbReference type="GO" id="GO:0002935">
    <property type="term" value="F:tRNA (adenine(37)-C2)-methyltransferase activity"/>
    <property type="evidence" value="ECO:0007669"/>
    <property type="project" value="UniProtKB-UniRule"/>
</dbReference>
<dbReference type="GO" id="GO:0000049">
    <property type="term" value="F:tRNA binding"/>
    <property type="evidence" value="ECO:0007669"/>
    <property type="project" value="UniProtKB-UniRule"/>
</dbReference>
<dbReference type="GO" id="GO:0070475">
    <property type="term" value="P:rRNA base methylation"/>
    <property type="evidence" value="ECO:0007669"/>
    <property type="project" value="UniProtKB-UniRule"/>
</dbReference>
<dbReference type="GO" id="GO:0030488">
    <property type="term" value="P:tRNA methylation"/>
    <property type="evidence" value="ECO:0007669"/>
    <property type="project" value="UniProtKB-UniRule"/>
</dbReference>
<dbReference type="CDD" id="cd01335">
    <property type="entry name" value="Radical_SAM"/>
    <property type="match status" value="1"/>
</dbReference>
<dbReference type="FunFam" id="3.20.20.70:FF:000008">
    <property type="entry name" value="Dual-specificity RNA methyltransferase RlmN"/>
    <property type="match status" value="1"/>
</dbReference>
<dbReference type="Gene3D" id="1.10.150.530">
    <property type="match status" value="1"/>
</dbReference>
<dbReference type="Gene3D" id="3.20.20.70">
    <property type="entry name" value="Aldolase class I"/>
    <property type="match status" value="1"/>
</dbReference>
<dbReference type="HAMAP" id="MF_01849">
    <property type="entry name" value="RNA_methyltr_RlmN"/>
    <property type="match status" value="1"/>
</dbReference>
<dbReference type="InterPro" id="IPR013785">
    <property type="entry name" value="Aldolase_TIM"/>
</dbReference>
<dbReference type="InterPro" id="IPR040072">
    <property type="entry name" value="Methyltransferase_A"/>
</dbReference>
<dbReference type="InterPro" id="IPR048641">
    <property type="entry name" value="RlmN_N"/>
</dbReference>
<dbReference type="InterPro" id="IPR027492">
    <property type="entry name" value="RNA_MTrfase_RlmN"/>
</dbReference>
<dbReference type="InterPro" id="IPR004383">
    <property type="entry name" value="rRNA_lsu_MTrfase_RlmN/Cfr"/>
</dbReference>
<dbReference type="InterPro" id="IPR007197">
    <property type="entry name" value="rSAM"/>
</dbReference>
<dbReference type="NCBIfam" id="TIGR00048">
    <property type="entry name" value="rRNA_mod_RlmN"/>
    <property type="match status" value="1"/>
</dbReference>
<dbReference type="PANTHER" id="PTHR30544">
    <property type="entry name" value="23S RRNA METHYLTRANSFERASE"/>
    <property type="match status" value="1"/>
</dbReference>
<dbReference type="PANTHER" id="PTHR30544:SF5">
    <property type="entry name" value="RADICAL SAM CORE DOMAIN-CONTAINING PROTEIN"/>
    <property type="match status" value="1"/>
</dbReference>
<dbReference type="Pfam" id="PF04055">
    <property type="entry name" value="Radical_SAM"/>
    <property type="match status" value="1"/>
</dbReference>
<dbReference type="Pfam" id="PF21016">
    <property type="entry name" value="RlmN_N"/>
    <property type="match status" value="1"/>
</dbReference>
<dbReference type="PIRSF" id="PIRSF006004">
    <property type="entry name" value="CHP00048"/>
    <property type="match status" value="1"/>
</dbReference>
<dbReference type="SFLD" id="SFLDF00275">
    <property type="entry name" value="adenosine_C2_methyltransferase"/>
    <property type="match status" value="1"/>
</dbReference>
<dbReference type="SFLD" id="SFLDS00029">
    <property type="entry name" value="Radical_SAM"/>
    <property type="match status" value="1"/>
</dbReference>
<dbReference type="SUPFAM" id="SSF102114">
    <property type="entry name" value="Radical SAM enzymes"/>
    <property type="match status" value="1"/>
</dbReference>
<dbReference type="PROSITE" id="PS51918">
    <property type="entry name" value="RADICAL_SAM"/>
    <property type="match status" value="1"/>
</dbReference>
<keyword id="KW-0004">4Fe-4S</keyword>
<keyword id="KW-0963">Cytoplasm</keyword>
<keyword id="KW-1015">Disulfide bond</keyword>
<keyword id="KW-0408">Iron</keyword>
<keyword id="KW-0411">Iron-sulfur</keyword>
<keyword id="KW-0479">Metal-binding</keyword>
<keyword id="KW-0489">Methyltransferase</keyword>
<keyword id="KW-0698">rRNA processing</keyword>
<keyword id="KW-0949">S-adenosyl-L-methionine</keyword>
<keyword id="KW-0808">Transferase</keyword>
<keyword id="KW-0819">tRNA processing</keyword>
<evidence type="ECO:0000255" key="1">
    <source>
        <dbReference type="HAMAP-Rule" id="MF_01849"/>
    </source>
</evidence>
<evidence type="ECO:0000255" key="2">
    <source>
        <dbReference type="PROSITE-ProRule" id="PRU01266"/>
    </source>
</evidence>
<evidence type="ECO:0000305" key="3"/>
<proteinExistence type="inferred from homology"/>
<protein>
    <recommendedName>
        <fullName evidence="1">Dual-specificity RNA methyltransferase RlmN</fullName>
        <ecNumber evidence="1">2.1.1.192</ecNumber>
    </recommendedName>
    <alternativeName>
        <fullName evidence="1">23S rRNA (adenine(2503)-C(2))-methyltransferase</fullName>
    </alternativeName>
    <alternativeName>
        <fullName evidence="1">23S rRNA m2A2503 methyltransferase</fullName>
    </alternativeName>
    <alternativeName>
        <fullName evidence="1">Ribosomal RNA large subunit methyltransferase N</fullName>
    </alternativeName>
    <alternativeName>
        <fullName evidence="1">tRNA (adenine(37)-C(2))-methyltransferase</fullName>
    </alternativeName>
    <alternativeName>
        <fullName evidence="1">tRNA m2A37 methyltransferase</fullName>
    </alternativeName>
</protein>
<comment type="function">
    <text evidence="1">Specifically methylates position 2 of adenine 2503 in 23S rRNA and position 2 of adenine 37 in tRNAs. m2A2503 modification seems to play a crucial role in the proofreading step occurring at the peptidyl transferase center and thus would serve to optimize ribosomal fidelity.</text>
</comment>
<comment type="catalytic activity">
    <reaction evidence="1">
        <text>adenosine(2503) in 23S rRNA + 2 reduced [2Fe-2S]-[ferredoxin] + 2 S-adenosyl-L-methionine = 2-methyladenosine(2503) in 23S rRNA + 5'-deoxyadenosine + L-methionine + 2 oxidized [2Fe-2S]-[ferredoxin] + S-adenosyl-L-homocysteine</text>
        <dbReference type="Rhea" id="RHEA:42916"/>
        <dbReference type="Rhea" id="RHEA-COMP:10000"/>
        <dbReference type="Rhea" id="RHEA-COMP:10001"/>
        <dbReference type="Rhea" id="RHEA-COMP:10152"/>
        <dbReference type="Rhea" id="RHEA-COMP:10282"/>
        <dbReference type="ChEBI" id="CHEBI:17319"/>
        <dbReference type="ChEBI" id="CHEBI:33737"/>
        <dbReference type="ChEBI" id="CHEBI:33738"/>
        <dbReference type="ChEBI" id="CHEBI:57844"/>
        <dbReference type="ChEBI" id="CHEBI:57856"/>
        <dbReference type="ChEBI" id="CHEBI:59789"/>
        <dbReference type="ChEBI" id="CHEBI:74411"/>
        <dbReference type="ChEBI" id="CHEBI:74497"/>
        <dbReference type="EC" id="2.1.1.192"/>
    </reaction>
</comment>
<comment type="catalytic activity">
    <reaction evidence="1">
        <text>adenosine(37) in tRNA + 2 reduced [2Fe-2S]-[ferredoxin] + 2 S-adenosyl-L-methionine = 2-methyladenosine(37) in tRNA + 5'-deoxyadenosine + L-methionine + 2 oxidized [2Fe-2S]-[ferredoxin] + S-adenosyl-L-homocysteine</text>
        <dbReference type="Rhea" id="RHEA:43332"/>
        <dbReference type="Rhea" id="RHEA-COMP:10000"/>
        <dbReference type="Rhea" id="RHEA-COMP:10001"/>
        <dbReference type="Rhea" id="RHEA-COMP:10162"/>
        <dbReference type="Rhea" id="RHEA-COMP:10485"/>
        <dbReference type="ChEBI" id="CHEBI:17319"/>
        <dbReference type="ChEBI" id="CHEBI:33737"/>
        <dbReference type="ChEBI" id="CHEBI:33738"/>
        <dbReference type="ChEBI" id="CHEBI:57844"/>
        <dbReference type="ChEBI" id="CHEBI:57856"/>
        <dbReference type="ChEBI" id="CHEBI:59789"/>
        <dbReference type="ChEBI" id="CHEBI:74411"/>
        <dbReference type="ChEBI" id="CHEBI:74497"/>
        <dbReference type="EC" id="2.1.1.192"/>
    </reaction>
</comment>
<comment type="cofactor">
    <cofactor evidence="1">
        <name>[4Fe-4S] cluster</name>
        <dbReference type="ChEBI" id="CHEBI:49883"/>
    </cofactor>
    <text evidence="1">Binds 1 [4Fe-4S] cluster. The cluster is coordinated with 3 cysteines and an exchangeable S-adenosyl-L-methionine.</text>
</comment>
<comment type="subcellular location">
    <subcellularLocation>
        <location evidence="1">Cytoplasm</location>
    </subcellularLocation>
</comment>
<comment type="miscellaneous">
    <text evidence="1">Reaction proceeds by a ping-pong mechanism involving intermediate methylation of a conserved cysteine residue.</text>
</comment>
<comment type="similarity">
    <text evidence="1">Belongs to the radical SAM superfamily. RlmN family.</text>
</comment>
<comment type="sequence caution" evidence="3">
    <conflict type="erroneous initiation">
        <sequence resource="EMBL-CDS" id="ACB23131"/>
    </conflict>
</comment>
<name>RLMN_METRJ</name>
<gene>
    <name evidence="1" type="primary">rlmN</name>
    <name type="ordered locus">Mrad2831_1122</name>
</gene>
<accession>B1M1U6</accession>
<reference key="1">
    <citation type="submission" date="2008-03" db="EMBL/GenBank/DDBJ databases">
        <title>Complete sequence of chromosome of Methylobacterium radiotolerans JCM 2831.</title>
        <authorList>
            <consortium name="US DOE Joint Genome Institute"/>
            <person name="Copeland A."/>
            <person name="Lucas S."/>
            <person name="Lapidus A."/>
            <person name="Glavina del Rio T."/>
            <person name="Dalin E."/>
            <person name="Tice H."/>
            <person name="Bruce D."/>
            <person name="Goodwin L."/>
            <person name="Pitluck S."/>
            <person name="Kiss H."/>
            <person name="Brettin T."/>
            <person name="Detter J.C."/>
            <person name="Han C."/>
            <person name="Kuske C.R."/>
            <person name="Schmutz J."/>
            <person name="Larimer F."/>
            <person name="Land M."/>
            <person name="Hauser L."/>
            <person name="Kyrpides N."/>
            <person name="Mikhailova N."/>
            <person name="Marx C.J."/>
            <person name="Richardson P."/>
        </authorList>
    </citation>
    <scope>NUCLEOTIDE SEQUENCE [LARGE SCALE GENOMIC DNA]</scope>
    <source>
        <strain>ATCC 27329 / DSM 1819 / JCM 2831 / NBRC 15690 / NCIMB 10815 / 0-1</strain>
    </source>
</reference>
<sequence length="424" mass="46523">MATPSLDSARAADAAIEKAPDLLPEALPGRRPSLVGLTRDALKAQLIGMGVPERESRMRAGQVWHWVNFRGASDFAEMTNVGKALKAQLAEHFTLERPEVASRQVSRDGTRKWLLRMAPTNRQEHNRGAEIECVYIPGPDRGTLCVSSQVGCTLTCSFCHTGTQRLVRNLSAAEIVQQLVTARDELGDWPGQMPSRDAGGSGEVGRLVTNIVFMGMGEPLYNLDAVVDAVGVMSDQEGLGLSRRRITVSTSGVVPQIPRLGEQANAMLAISLHAVRDDLRDELVPLNRKYPIAELLAACRAYPGLSNARRITFEYVMLKGVNDSDADARELVRLLKGIPAKINLIPFNPWPGSRYECSDWDRIERFSEIVFNAGYASPVRTPRGRDILAACGQLKSETEKLRARARLMQEEGIGVESFYAGADD</sequence>
<organism>
    <name type="scientific">Methylobacterium radiotolerans (strain ATCC 27329 / DSM 1819 / JCM 2831 / NBRC 15690 / NCIMB 10815 / 0-1)</name>
    <dbReference type="NCBI Taxonomy" id="426355"/>
    <lineage>
        <taxon>Bacteria</taxon>
        <taxon>Pseudomonadati</taxon>
        <taxon>Pseudomonadota</taxon>
        <taxon>Alphaproteobacteria</taxon>
        <taxon>Hyphomicrobiales</taxon>
        <taxon>Methylobacteriaceae</taxon>
        <taxon>Methylobacterium</taxon>
    </lineage>
</organism>
<feature type="chain" id="PRO_0000350255" description="Dual-specificity RNA methyltransferase RlmN">
    <location>
        <begin position="1"/>
        <end position="424"/>
    </location>
</feature>
<feature type="domain" description="Radical SAM core" evidence="2">
    <location>
        <begin position="138"/>
        <end position="388"/>
    </location>
</feature>
<feature type="active site" description="Proton acceptor" evidence="1">
    <location>
        <position position="132"/>
    </location>
</feature>
<feature type="active site" description="S-methylcysteine intermediate" evidence="1">
    <location>
        <position position="391"/>
    </location>
</feature>
<feature type="binding site" evidence="1">
    <location>
        <position position="152"/>
    </location>
    <ligand>
        <name>[4Fe-4S] cluster</name>
        <dbReference type="ChEBI" id="CHEBI:49883"/>
        <note>4Fe-4S-S-AdoMet</note>
    </ligand>
</feature>
<feature type="binding site" evidence="1">
    <location>
        <position position="156"/>
    </location>
    <ligand>
        <name>[4Fe-4S] cluster</name>
        <dbReference type="ChEBI" id="CHEBI:49883"/>
        <note>4Fe-4S-S-AdoMet</note>
    </ligand>
</feature>
<feature type="binding site" evidence="1">
    <location>
        <position position="159"/>
    </location>
    <ligand>
        <name>[4Fe-4S] cluster</name>
        <dbReference type="ChEBI" id="CHEBI:49883"/>
        <note>4Fe-4S-S-AdoMet</note>
    </ligand>
</feature>
<feature type="binding site" evidence="1">
    <location>
        <begin position="217"/>
        <end position="218"/>
    </location>
    <ligand>
        <name>S-adenosyl-L-methionine</name>
        <dbReference type="ChEBI" id="CHEBI:59789"/>
    </ligand>
</feature>
<feature type="binding site" evidence="1">
    <location>
        <position position="249"/>
    </location>
    <ligand>
        <name>S-adenosyl-L-methionine</name>
        <dbReference type="ChEBI" id="CHEBI:59789"/>
    </ligand>
</feature>
<feature type="binding site" evidence="1">
    <location>
        <begin position="271"/>
        <end position="273"/>
    </location>
    <ligand>
        <name>S-adenosyl-L-methionine</name>
        <dbReference type="ChEBI" id="CHEBI:59789"/>
    </ligand>
</feature>
<feature type="binding site" evidence="1">
    <location>
        <position position="348"/>
    </location>
    <ligand>
        <name>S-adenosyl-L-methionine</name>
        <dbReference type="ChEBI" id="CHEBI:59789"/>
    </ligand>
</feature>
<feature type="disulfide bond" description="(transient)" evidence="1">
    <location>
        <begin position="145"/>
        <end position="391"/>
    </location>
</feature>